<sequence>MTNVVVSGEQLQEAFREVAAIVDSTVAITAGPRGKTVGINKPYGAPEITKDGYKVMKGIKPEKPLNAAIASIFAQSCSQCNDKVGDGTTTCSILTSNMIMEASKSIAAGNDRVGIKNGIQKAKDVILKEIASMSRTISLEKIDEVAQVAIISANGDKDIGNSIADSVKKVGKEGVITVEESKGSKELEVELTTGMQFDRGYLSPYFITNNEKMIVELDNPYLLITEKKLNIIQPLLPVLEAIVKSGKPLVIIAEDIEGEALSTLVINKLRGGLKVAAVKAPGFGDRRKEMLEDIATLTGAKYVIKDELGIKMEDLTLDDLGTAKNVKITKDNTTVVSENSDSDSVKARIEQIKSQIETSTSDYDKEKLRERLAKLSGGVAVLKVGGATEVEVKERRDRVEDALHATRAAIEEGIVPGGGVALLYASSVLDKLKGASDEEQIGINIIKKVLSAPIRRLVKNAGLESAVIIDYLIKQNDKELIYNVEAMNYANAFTAGVIDPAKVVRIAFETAVSVASVLITTESMIVDVPSKENASSPMGAGEMSGMGGF</sequence>
<accession>C0R2V3</accession>
<proteinExistence type="inferred from homology"/>
<organism>
    <name type="scientific">Wolbachia sp. subsp. Drosophila simulans (strain wRi)</name>
    <dbReference type="NCBI Taxonomy" id="66084"/>
    <lineage>
        <taxon>Bacteria</taxon>
        <taxon>Pseudomonadati</taxon>
        <taxon>Pseudomonadota</taxon>
        <taxon>Alphaproteobacteria</taxon>
        <taxon>Rickettsiales</taxon>
        <taxon>Anaplasmataceae</taxon>
        <taxon>Wolbachieae</taxon>
        <taxon>Wolbachia</taxon>
    </lineage>
</organism>
<evidence type="ECO:0000255" key="1">
    <source>
        <dbReference type="HAMAP-Rule" id="MF_00600"/>
    </source>
</evidence>
<name>CH60_WOLWR</name>
<dbReference type="EC" id="5.6.1.7" evidence="1"/>
<dbReference type="EMBL" id="CP001391">
    <property type="protein sequence ID" value="ACN95245.1"/>
    <property type="molecule type" value="Genomic_DNA"/>
</dbReference>
<dbReference type="RefSeq" id="WP_006280301.1">
    <property type="nucleotide sequence ID" value="NZ_MKIF01000195.1"/>
</dbReference>
<dbReference type="SMR" id="C0R2V3"/>
<dbReference type="STRING" id="66084.WRi_004590"/>
<dbReference type="KEGG" id="wri:WRi_004590"/>
<dbReference type="HOGENOM" id="CLU_016503_3_0_5"/>
<dbReference type="Proteomes" id="UP000001293">
    <property type="component" value="Chromosome"/>
</dbReference>
<dbReference type="GO" id="GO:0005737">
    <property type="term" value="C:cytoplasm"/>
    <property type="evidence" value="ECO:0007669"/>
    <property type="project" value="UniProtKB-SubCell"/>
</dbReference>
<dbReference type="GO" id="GO:0005524">
    <property type="term" value="F:ATP binding"/>
    <property type="evidence" value="ECO:0007669"/>
    <property type="project" value="UniProtKB-UniRule"/>
</dbReference>
<dbReference type="GO" id="GO:0140662">
    <property type="term" value="F:ATP-dependent protein folding chaperone"/>
    <property type="evidence" value="ECO:0007669"/>
    <property type="project" value="InterPro"/>
</dbReference>
<dbReference type="GO" id="GO:0016853">
    <property type="term" value="F:isomerase activity"/>
    <property type="evidence" value="ECO:0007669"/>
    <property type="project" value="UniProtKB-KW"/>
</dbReference>
<dbReference type="GO" id="GO:0051082">
    <property type="term" value="F:unfolded protein binding"/>
    <property type="evidence" value="ECO:0007669"/>
    <property type="project" value="UniProtKB-UniRule"/>
</dbReference>
<dbReference type="GO" id="GO:0042026">
    <property type="term" value="P:protein refolding"/>
    <property type="evidence" value="ECO:0007669"/>
    <property type="project" value="UniProtKB-UniRule"/>
</dbReference>
<dbReference type="CDD" id="cd03344">
    <property type="entry name" value="GroEL"/>
    <property type="match status" value="1"/>
</dbReference>
<dbReference type="FunFam" id="3.50.7.10:FF:000001">
    <property type="entry name" value="60 kDa chaperonin"/>
    <property type="match status" value="1"/>
</dbReference>
<dbReference type="Gene3D" id="3.50.7.10">
    <property type="entry name" value="GroEL"/>
    <property type="match status" value="1"/>
</dbReference>
<dbReference type="Gene3D" id="1.10.560.10">
    <property type="entry name" value="GroEL-like equatorial domain"/>
    <property type="match status" value="1"/>
</dbReference>
<dbReference type="Gene3D" id="3.30.260.10">
    <property type="entry name" value="TCP-1-like chaperonin intermediate domain"/>
    <property type="match status" value="1"/>
</dbReference>
<dbReference type="HAMAP" id="MF_00600">
    <property type="entry name" value="CH60"/>
    <property type="match status" value="1"/>
</dbReference>
<dbReference type="InterPro" id="IPR018370">
    <property type="entry name" value="Chaperonin_Cpn60_CS"/>
</dbReference>
<dbReference type="InterPro" id="IPR001844">
    <property type="entry name" value="Cpn60/GroEL"/>
</dbReference>
<dbReference type="InterPro" id="IPR002423">
    <property type="entry name" value="Cpn60/GroEL/TCP-1"/>
</dbReference>
<dbReference type="InterPro" id="IPR027409">
    <property type="entry name" value="GroEL-like_apical_dom_sf"/>
</dbReference>
<dbReference type="InterPro" id="IPR027413">
    <property type="entry name" value="GROEL-like_equatorial_sf"/>
</dbReference>
<dbReference type="InterPro" id="IPR027410">
    <property type="entry name" value="TCP-1-like_intermed_sf"/>
</dbReference>
<dbReference type="NCBIfam" id="TIGR02348">
    <property type="entry name" value="GroEL"/>
    <property type="match status" value="1"/>
</dbReference>
<dbReference type="NCBIfam" id="NF000592">
    <property type="entry name" value="PRK00013.1"/>
    <property type="match status" value="1"/>
</dbReference>
<dbReference type="NCBIfam" id="NF009487">
    <property type="entry name" value="PRK12849.1"/>
    <property type="match status" value="1"/>
</dbReference>
<dbReference type="NCBIfam" id="NF009488">
    <property type="entry name" value="PRK12850.1"/>
    <property type="match status" value="1"/>
</dbReference>
<dbReference type="NCBIfam" id="NF009489">
    <property type="entry name" value="PRK12851.1"/>
    <property type="match status" value="1"/>
</dbReference>
<dbReference type="PANTHER" id="PTHR45633">
    <property type="entry name" value="60 KDA HEAT SHOCK PROTEIN, MITOCHONDRIAL"/>
    <property type="match status" value="1"/>
</dbReference>
<dbReference type="Pfam" id="PF00118">
    <property type="entry name" value="Cpn60_TCP1"/>
    <property type="match status" value="1"/>
</dbReference>
<dbReference type="PRINTS" id="PR00298">
    <property type="entry name" value="CHAPERONIN60"/>
</dbReference>
<dbReference type="SUPFAM" id="SSF52029">
    <property type="entry name" value="GroEL apical domain-like"/>
    <property type="match status" value="1"/>
</dbReference>
<dbReference type="SUPFAM" id="SSF48592">
    <property type="entry name" value="GroEL equatorial domain-like"/>
    <property type="match status" value="1"/>
</dbReference>
<dbReference type="SUPFAM" id="SSF54849">
    <property type="entry name" value="GroEL-intermediate domain like"/>
    <property type="match status" value="1"/>
</dbReference>
<dbReference type="PROSITE" id="PS00296">
    <property type="entry name" value="CHAPERONINS_CPN60"/>
    <property type="match status" value="1"/>
</dbReference>
<reference key="1">
    <citation type="journal article" date="2009" name="Proc. Natl. Acad. Sci. U.S.A.">
        <title>The mosaic genome structure of the Wolbachia wRi strain infecting Drosophila simulans.</title>
        <authorList>
            <person name="Klasson L."/>
            <person name="Westberg J."/>
            <person name="Sapountzis P."/>
            <person name="Naeslund K."/>
            <person name="Lutnaes Y."/>
            <person name="Darby A.C."/>
            <person name="Veneti Z."/>
            <person name="Chen L."/>
            <person name="Braig H.R."/>
            <person name="Garrett R."/>
            <person name="Bourtzis K."/>
            <person name="Andersson S.G."/>
        </authorList>
    </citation>
    <scope>NUCLEOTIDE SEQUENCE [LARGE SCALE GENOMIC DNA]</scope>
    <source>
        <strain>wRi</strain>
    </source>
</reference>
<comment type="function">
    <text evidence="1">Together with its co-chaperonin GroES, plays an essential role in assisting protein folding. The GroEL-GroES system forms a nano-cage that allows encapsulation of the non-native substrate proteins and provides a physical environment optimized to promote and accelerate protein folding.</text>
</comment>
<comment type="catalytic activity">
    <reaction evidence="1">
        <text>ATP + H2O + a folded polypeptide = ADP + phosphate + an unfolded polypeptide.</text>
        <dbReference type="EC" id="5.6.1.7"/>
    </reaction>
</comment>
<comment type="subunit">
    <text evidence="1">Forms a cylinder of 14 subunits composed of two heptameric rings stacked back-to-back. Interacts with the co-chaperonin GroES.</text>
</comment>
<comment type="subcellular location">
    <subcellularLocation>
        <location evidence="1">Cytoplasm</location>
    </subcellularLocation>
</comment>
<comment type="similarity">
    <text evidence="1">Belongs to the chaperonin (HSP60) family.</text>
</comment>
<keyword id="KW-0067">ATP-binding</keyword>
<keyword id="KW-0143">Chaperone</keyword>
<keyword id="KW-0963">Cytoplasm</keyword>
<keyword id="KW-0413">Isomerase</keyword>
<keyword id="KW-0547">Nucleotide-binding</keyword>
<feature type="chain" id="PRO_1000147051" description="Chaperonin GroEL">
    <location>
        <begin position="1"/>
        <end position="549"/>
    </location>
</feature>
<feature type="binding site" evidence="1">
    <location>
        <begin position="29"/>
        <end position="32"/>
    </location>
    <ligand>
        <name>ATP</name>
        <dbReference type="ChEBI" id="CHEBI:30616"/>
    </ligand>
</feature>
<feature type="binding site" evidence="1">
    <location>
        <position position="50"/>
    </location>
    <ligand>
        <name>ATP</name>
        <dbReference type="ChEBI" id="CHEBI:30616"/>
    </ligand>
</feature>
<feature type="binding site" evidence="1">
    <location>
        <begin position="86"/>
        <end position="90"/>
    </location>
    <ligand>
        <name>ATP</name>
        <dbReference type="ChEBI" id="CHEBI:30616"/>
    </ligand>
</feature>
<feature type="binding site" evidence="1">
    <location>
        <position position="418"/>
    </location>
    <ligand>
        <name>ATP</name>
        <dbReference type="ChEBI" id="CHEBI:30616"/>
    </ligand>
</feature>
<feature type="binding site" evidence="1">
    <location>
        <position position="499"/>
    </location>
    <ligand>
        <name>ATP</name>
        <dbReference type="ChEBI" id="CHEBI:30616"/>
    </ligand>
</feature>
<gene>
    <name evidence="1" type="primary">groEL</name>
    <name evidence="1" type="synonym">groL</name>
    <name type="ordered locus">WRi_004590</name>
</gene>
<protein>
    <recommendedName>
        <fullName evidence="1">Chaperonin GroEL</fullName>
        <ecNumber evidence="1">5.6.1.7</ecNumber>
    </recommendedName>
    <alternativeName>
        <fullName evidence="1">60 kDa chaperonin</fullName>
    </alternativeName>
    <alternativeName>
        <fullName evidence="1">Chaperonin-60</fullName>
        <shortName evidence="1">Cpn60</shortName>
    </alternativeName>
</protein>